<name>ARI11_ARATH</name>
<proteinExistence type="evidence at transcript level"/>
<sequence>MSSSDRDIIDIESGEEDLYSDGGNDIIDIESGEEDLYSDGGNVSDDYNPVDDTISRSEKSYVVVKEEDILKLQRDDIEQVSTVLSVSQVESIVLLLHYHWCVSKLEDEWFTDEERIRKTVGILKEPVVDVNGTEVDIQCGICFESYTRKEIARVSCGHPYCKTCWTGYITTKIEDGPGCLRVKCPEPSCYAVVGQDMIDEVTEKKDKDKYYRYFLRSYVEDGKKMKWCPSPGCEYAVEFGVNGSSSYDVSCLCSYKFCWNCCEDAHSPVDCETVSKWLLKNKDESENMNWILAKTKPCPKCKRPIEKNTGCNHMSCSAPCRHYFCWACLQPLSDHKACNAFKADNEDETKRKRAKDAIDRYTHFYERWAFNQSSRLKAMSDLEKWQSVELKQLSDIQSTPETQLSFTVDAWLQIIECRRVLKWTYAYGYYILSQERNKRVFARTFSLSCCSAEAENGLERLHHCAEEELKQFIGKIEDPSKNFGELRAKLIDLTKATKTYFENLVKALENGLVDVAYNESQSIEEPESFTKRSKTRKIKTLI</sequence>
<protein>
    <recommendedName>
        <fullName>Probable E3 ubiquitin-protein ligase ARI11</fullName>
        <ecNumber evidence="2">2.3.2.31</ecNumber>
    </recommendedName>
    <alternativeName>
        <fullName>ARIADNE-like protein ARI11</fullName>
    </alternativeName>
    <alternativeName>
        <fullName>Protein ariadne homolog 11</fullName>
    </alternativeName>
    <alternativeName>
        <fullName evidence="7">RING-type E3 ubiquitin transferase ARI11</fullName>
    </alternativeName>
</protein>
<accession>Q9SKC2</accession>
<accession>Q1PEY0</accession>
<comment type="function">
    <text evidence="1 5">Might act as an E3 ubiquitin-protein ligase, or as part of E3 complex, which accepts ubiquitin from specific E2 ubiquitin-conjugating enzymes and then transfers it to substrates.</text>
</comment>
<comment type="catalytic activity">
    <reaction evidence="2">
        <text>[E2 ubiquitin-conjugating enzyme]-S-ubiquitinyl-L-cysteine + [acceptor protein]-L-lysine = [E2 ubiquitin-conjugating enzyme]-L-cysteine + [acceptor protein]-N(6)-ubiquitinyl-L-lysine.</text>
        <dbReference type="EC" id="2.3.2.31"/>
    </reaction>
</comment>
<comment type="cofactor">
    <cofactor evidence="7">
        <name>Zn(2+)</name>
        <dbReference type="ChEBI" id="CHEBI:29105"/>
    </cofactor>
    <text evidence="7">Binds 4 Zn(2+) ions per subunit.</text>
</comment>
<comment type="pathway">
    <text>Protein modification; protein ubiquitination.</text>
</comment>
<comment type="alternative products">
    <event type="alternative splicing"/>
    <isoform>
        <id>Q9SKC2-1</id>
        <name>1</name>
        <sequence type="displayed"/>
    </isoform>
    <isoform>
        <id>Q9SKC2-2</id>
        <name>2</name>
        <sequence type="described" ref="VSP_036003 VSP_036004"/>
    </isoform>
</comment>
<comment type="domain">
    <text evidence="2">Members of the RBR family are atypical E3 ligases. They interact with the E2 conjugating enzyme UBE2L3 and function like HECT-type E3 enzymes: they bind E2s via the first RING-type zinc finger, but require an obligate trans-thiolation step during the ubiquitin transfer, requiring a conserved active site Cys residue in the second RING-type zinc finger. The active site probably forms a thioester intermediate with ubiquitin taken from the active-site cysteine of the E2 before ultimately transferring it to a Lys residue on the substrate.</text>
</comment>
<comment type="miscellaneous">
    <molecule>Isoform 2</molecule>
    <text evidence="7">May be due to a competing acceptor splice site.</text>
</comment>
<comment type="similarity">
    <text evidence="7">Belongs to the RBR family. Ariadne subfamily.</text>
</comment>
<dbReference type="EC" id="2.3.2.31" evidence="2"/>
<dbReference type="EMBL" id="AJ510214">
    <property type="protein sequence ID" value="CAD52893.1"/>
    <property type="molecule type" value="Genomic_DNA"/>
</dbReference>
<dbReference type="EMBL" id="AC006533">
    <property type="protein sequence ID" value="AAD32294.1"/>
    <property type="molecule type" value="Genomic_DNA"/>
</dbReference>
<dbReference type="EMBL" id="CP002685">
    <property type="protein sequence ID" value="AEC08583.1"/>
    <property type="molecule type" value="Genomic_DNA"/>
</dbReference>
<dbReference type="EMBL" id="DQ446587">
    <property type="protein sequence ID" value="ABE65879.1"/>
    <property type="molecule type" value="mRNA"/>
</dbReference>
<dbReference type="PIR" id="A84725">
    <property type="entry name" value="A84725"/>
</dbReference>
<dbReference type="RefSeq" id="NP_180737.3">
    <molecule id="Q9SKC2-2"/>
    <property type="nucleotide sequence ID" value="NM_128736.3"/>
</dbReference>
<dbReference type="SMR" id="Q9SKC2"/>
<dbReference type="FunCoup" id="Q9SKC2">
    <property type="interactions" value="107"/>
</dbReference>
<dbReference type="STRING" id="3702.Q9SKC2"/>
<dbReference type="PaxDb" id="3702-AT2G31780.1"/>
<dbReference type="ProteomicsDB" id="245187">
    <molecule id="Q9SKC2-1"/>
</dbReference>
<dbReference type="EnsemblPlants" id="AT2G31780.1">
    <molecule id="Q9SKC2-2"/>
    <property type="protein sequence ID" value="AT2G31780.1"/>
    <property type="gene ID" value="AT2G31780"/>
</dbReference>
<dbReference type="GeneID" id="817735"/>
<dbReference type="Gramene" id="AT2G31780.1">
    <molecule id="Q9SKC2-2"/>
    <property type="protein sequence ID" value="AT2G31780.1"/>
    <property type="gene ID" value="AT2G31780"/>
</dbReference>
<dbReference type="KEGG" id="ath:AT2G31780"/>
<dbReference type="Araport" id="AT2G31780"/>
<dbReference type="TAIR" id="AT2G31780">
    <property type="gene designation" value="ARI11"/>
</dbReference>
<dbReference type="eggNOG" id="KOG1815">
    <property type="taxonomic scope" value="Eukaryota"/>
</dbReference>
<dbReference type="HOGENOM" id="CLU_009823_3_1_1"/>
<dbReference type="InParanoid" id="Q9SKC2"/>
<dbReference type="OMA" id="WNCCEDA"/>
<dbReference type="PhylomeDB" id="Q9SKC2"/>
<dbReference type="UniPathway" id="UPA00143"/>
<dbReference type="PRO" id="PR:Q9SKC2"/>
<dbReference type="Proteomes" id="UP000006548">
    <property type="component" value="Chromosome 2"/>
</dbReference>
<dbReference type="ExpressionAtlas" id="Q9SKC2">
    <property type="expression patterns" value="baseline and differential"/>
</dbReference>
<dbReference type="GO" id="GO:0004842">
    <property type="term" value="F:ubiquitin-protein transferase activity"/>
    <property type="evidence" value="ECO:0007669"/>
    <property type="project" value="InterPro"/>
</dbReference>
<dbReference type="GO" id="GO:0008270">
    <property type="term" value="F:zinc ion binding"/>
    <property type="evidence" value="ECO:0007669"/>
    <property type="project" value="UniProtKB-KW"/>
</dbReference>
<dbReference type="GO" id="GO:0016567">
    <property type="term" value="P:protein ubiquitination"/>
    <property type="evidence" value="ECO:0007669"/>
    <property type="project" value="UniProtKB-UniPathway"/>
</dbReference>
<dbReference type="CDD" id="cd20346">
    <property type="entry name" value="BRcat_RBR_ANKIB1"/>
    <property type="match status" value="1"/>
</dbReference>
<dbReference type="CDD" id="cd23141">
    <property type="entry name" value="RING-HC_ARI6-like"/>
    <property type="match status" value="1"/>
</dbReference>
<dbReference type="FunFam" id="1.20.120.1750:FF:000027">
    <property type="entry name" value="RBR-type E3 ubiquitin transferase"/>
    <property type="match status" value="1"/>
</dbReference>
<dbReference type="FunFam" id="3.30.40.10:FF:000019">
    <property type="entry name" value="RBR-type E3 ubiquitin transferase"/>
    <property type="match status" value="1"/>
</dbReference>
<dbReference type="Gene3D" id="1.20.120.1750">
    <property type="match status" value="1"/>
</dbReference>
<dbReference type="Gene3D" id="3.30.40.10">
    <property type="entry name" value="Zinc/RING finger domain, C3HC4 (zinc finger)"/>
    <property type="match status" value="1"/>
</dbReference>
<dbReference type="InterPro" id="IPR045840">
    <property type="entry name" value="Ariadne"/>
</dbReference>
<dbReference type="InterPro" id="IPR031127">
    <property type="entry name" value="E3_UB_ligase_RBR"/>
</dbReference>
<dbReference type="InterPro" id="IPR002867">
    <property type="entry name" value="IBR_dom"/>
</dbReference>
<dbReference type="InterPro" id="IPR044066">
    <property type="entry name" value="TRIAD_supradom"/>
</dbReference>
<dbReference type="InterPro" id="IPR001841">
    <property type="entry name" value="Znf_RING"/>
</dbReference>
<dbReference type="InterPro" id="IPR013083">
    <property type="entry name" value="Znf_RING/FYVE/PHD"/>
</dbReference>
<dbReference type="InterPro" id="IPR017907">
    <property type="entry name" value="Znf_RING_CS"/>
</dbReference>
<dbReference type="PANTHER" id="PTHR11685">
    <property type="entry name" value="RBR FAMILY RING FINGER AND IBR DOMAIN-CONTAINING"/>
    <property type="match status" value="1"/>
</dbReference>
<dbReference type="Pfam" id="PF19422">
    <property type="entry name" value="Ariadne"/>
    <property type="match status" value="1"/>
</dbReference>
<dbReference type="Pfam" id="PF01485">
    <property type="entry name" value="IBR"/>
    <property type="match status" value="1"/>
</dbReference>
<dbReference type="Pfam" id="PF22191">
    <property type="entry name" value="IBR_1"/>
    <property type="match status" value="1"/>
</dbReference>
<dbReference type="SMART" id="SM00647">
    <property type="entry name" value="IBR"/>
    <property type="match status" value="2"/>
</dbReference>
<dbReference type="SUPFAM" id="SSF57850">
    <property type="entry name" value="RING/U-box"/>
    <property type="match status" value="3"/>
</dbReference>
<dbReference type="PROSITE" id="PS51873">
    <property type="entry name" value="TRIAD"/>
    <property type="match status" value="1"/>
</dbReference>
<dbReference type="PROSITE" id="PS00518">
    <property type="entry name" value="ZF_RING_1"/>
    <property type="match status" value="1"/>
</dbReference>
<dbReference type="PROSITE" id="PS50089">
    <property type="entry name" value="ZF_RING_2"/>
    <property type="match status" value="1"/>
</dbReference>
<organism>
    <name type="scientific">Arabidopsis thaliana</name>
    <name type="common">Mouse-ear cress</name>
    <dbReference type="NCBI Taxonomy" id="3702"/>
    <lineage>
        <taxon>Eukaryota</taxon>
        <taxon>Viridiplantae</taxon>
        <taxon>Streptophyta</taxon>
        <taxon>Embryophyta</taxon>
        <taxon>Tracheophyta</taxon>
        <taxon>Spermatophyta</taxon>
        <taxon>Magnoliopsida</taxon>
        <taxon>eudicotyledons</taxon>
        <taxon>Gunneridae</taxon>
        <taxon>Pentapetalae</taxon>
        <taxon>rosids</taxon>
        <taxon>malvids</taxon>
        <taxon>Brassicales</taxon>
        <taxon>Brassicaceae</taxon>
        <taxon>Camelineae</taxon>
        <taxon>Arabidopsis</taxon>
    </lineage>
</organism>
<gene>
    <name type="primary">ARI11</name>
    <name type="ordered locus">At2g31780</name>
    <name type="ORF">F20M17.18</name>
</gene>
<evidence type="ECO:0000250" key="1"/>
<evidence type="ECO:0000250" key="2">
    <source>
        <dbReference type="UniProtKB" id="Q9Y4X5"/>
    </source>
</evidence>
<evidence type="ECO:0000255" key="3">
    <source>
        <dbReference type="PROSITE-ProRule" id="PRU01221"/>
    </source>
</evidence>
<evidence type="ECO:0000256" key="4">
    <source>
        <dbReference type="SAM" id="MobiDB-lite"/>
    </source>
</evidence>
<evidence type="ECO:0000269" key="5">
    <source>
    </source>
</evidence>
<evidence type="ECO:0000303" key="6">
    <source>
    </source>
</evidence>
<evidence type="ECO:0000305" key="7"/>
<reference key="1">
    <citation type="journal article" date="2003" name="Plant Physiol.">
        <title>Identification and characterization of the ARIADNE gene family in Arabidopsis. A group of putative E3 ligases.</title>
        <authorList>
            <person name="Mladek C."/>
            <person name="Guger K."/>
            <person name="Hauser M.-T."/>
        </authorList>
    </citation>
    <scope>NUCLEOTIDE SEQUENCE [GENOMIC DNA]</scope>
    <scope>NOMENCLATURE</scope>
    <scope>GENE FAMILY</scope>
    <source>
        <strain>cv. Columbia</strain>
    </source>
</reference>
<reference key="2">
    <citation type="journal article" date="1999" name="Nature">
        <title>Sequence and analysis of chromosome 2 of the plant Arabidopsis thaliana.</title>
        <authorList>
            <person name="Lin X."/>
            <person name="Kaul S."/>
            <person name="Rounsley S.D."/>
            <person name="Shea T.P."/>
            <person name="Benito M.-I."/>
            <person name="Town C.D."/>
            <person name="Fujii C.Y."/>
            <person name="Mason T.M."/>
            <person name="Bowman C.L."/>
            <person name="Barnstead M.E."/>
            <person name="Feldblyum T.V."/>
            <person name="Buell C.R."/>
            <person name="Ketchum K.A."/>
            <person name="Lee J.J."/>
            <person name="Ronning C.M."/>
            <person name="Koo H.L."/>
            <person name="Moffat K.S."/>
            <person name="Cronin L.A."/>
            <person name="Shen M."/>
            <person name="Pai G."/>
            <person name="Van Aken S."/>
            <person name="Umayam L."/>
            <person name="Tallon L.J."/>
            <person name="Gill J.E."/>
            <person name="Adams M.D."/>
            <person name="Carrera A.J."/>
            <person name="Creasy T.H."/>
            <person name="Goodman H.M."/>
            <person name="Somerville C.R."/>
            <person name="Copenhaver G.P."/>
            <person name="Preuss D."/>
            <person name="Nierman W.C."/>
            <person name="White O."/>
            <person name="Eisen J.A."/>
            <person name="Salzberg S.L."/>
            <person name="Fraser C.M."/>
            <person name="Venter J.C."/>
        </authorList>
    </citation>
    <scope>NUCLEOTIDE SEQUENCE [LARGE SCALE GENOMIC DNA]</scope>
    <source>
        <strain>cv. Columbia</strain>
    </source>
</reference>
<reference key="3">
    <citation type="journal article" date="2017" name="Plant J.">
        <title>Araport11: a complete reannotation of the Arabidopsis thaliana reference genome.</title>
        <authorList>
            <person name="Cheng C.Y."/>
            <person name="Krishnakumar V."/>
            <person name="Chan A.P."/>
            <person name="Thibaud-Nissen F."/>
            <person name="Schobel S."/>
            <person name="Town C.D."/>
        </authorList>
    </citation>
    <scope>GENOME REANNOTATION</scope>
    <source>
        <strain>cv. Columbia</strain>
    </source>
</reference>
<reference key="4">
    <citation type="journal article" date="2006" name="Plant Biotechnol. J.">
        <title>Simultaneous high-throughput recombinational cloning of open reading frames in closed and open configurations.</title>
        <authorList>
            <person name="Underwood B.A."/>
            <person name="Vanderhaeghen R."/>
            <person name="Whitford R."/>
            <person name="Town C.D."/>
            <person name="Hilson P."/>
        </authorList>
    </citation>
    <scope>NUCLEOTIDE SEQUENCE [LARGE SCALE MRNA] (ISOFORM 2)</scope>
    <source>
        <strain>cv. Columbia</strain>
    </source>
</reference>
<reference key="5">
    <citation type="journal article" date="2002" name="Mol. Biol. Evol.">
        <title>Comparative genomics of the RBR family, including the Parkinson's disease-related gene parkin and the genes of the ariadne subfamily.</title>
        <authorList>
            <person name="Marin I."/>
            <person name="Ferrus A."/>
        </authorList>
    </citation>
    <scope>FUNCTION</scope>
</reference>
<keyword id="KW-0025">Alternative splicing</keyword>
<keyword id="KW-0479">Metal-binding</keyword>
<keyword id="KW-1185">Reference proteome</keyword>
<keyword id="KW-0677">Repeat</keyword>
<keyword id="KW-0808">Transferase</keyword>
<keyword id="KW-0833">Ubl conjugation pathway</keyword>
<keyword id="KW-0862">Zinc</keyword>
<keyword id="KW-0863">Zinc-finger</keyword>
<feature type="chain" id="PRO_0000356204" description="Probable E3 ubiquitin-protein ligase ARI11">
    <location>
        <begin position="1"/>
        <end position="542"/>
    </location>
</feature>
<feature type="zinc finger region" description="RING-type 1" evidence="3">
    <location>
        <begin position="139"/>
        <end position="189"/>
    </location>
</feature>
<feature type="zinc finger region" description="IBR-type" evidence="3">
    <location>
        <begin position="208"/>
        <end position="271"/>
    </location>
</feature>
<feature type="zinc finger region" description="RING-type 2; atypical" evidence="3">
    <location>
        <begin position="298"/>
        <end position="328"/>
    </location>
</feature>
<feature type="region of interest" description="Disordered" evidence="4">
    <location>
        <begin position="1"/>
        <end position="25"/>
    </location>
</feature>
<feature type="region of interest" description="TRIAD supradomain" evidence="3">
    <location>
        <begin position="135"/>
        <end position="342"/>
    </location>
</feature>
<feature type="compositionally biased region" description="Acidic residues" evidence="4">
    <location>
        <begin position="10"/>
        <end position="19"/>
    </location>
</feature>
<feature type="active site" evidence="3">
    <location>
        <position position="311"/>
    </location>
</feature>
<feature type="binding site" evidence="3">
    <location>
        <position position="139"/>
    </location>
    <ligand>
        <name>Zn(2+)</name>
        <dbReference type="ChEBI" id="CHEBI:29105"/>
        <label>1</label>
    </ligand>
</feature>
<feature type="binding site" evidence="3">
    <location>
        <position position="142"/>
    </location>
    <ligand>
        <name>Zn(2+)</name>
        <dbReference type="ChEBI" id="CHEBI:29105"/>
        <label>1</label>
    </ligand>
</feature>
<feature type="binding site" evidence="3">
    <location>
        <position position="156"/>
    </location>
    <ligand>
        <name>Zn(2+)</name>
        <dbReference type="ChEBI" id="CHEBI:29105"/>
        <label>2</label>
    </ligand>
</feature>
<feature type="binding site" evidence="3">
    <location>
        <position position="158"/>
    </location>
    <ligand>
        <name>Zn(2+)</name>
        <dbReference type="ChEBI" id="CHEBI:29105"/>
        <label>2</label>
    </ligand>
</feature>
<feature type="binding site" evidence="3">
    <location>
        <position position="161"/>
    </location>
    <ligand>
        <name>Zn(2+)</name>
        <dbReference type="ChEBI" id="CHEBI:29105"/>
        <label>1</label>
    </ligand>
</feature>
<feature type="binding site" evidence="3">
    <location>
        <position position="164"/>
    </location>
    <ligand>
        <name>Zn(2+)</name>
        <dbReference type="ChEBI" id="CHEBI:29105"/>
        <label>1</label>
    </ligand>
</feature>
<feature type="binding site" evidence="3">
    <location>
        <position position="184"/>
    </location>
    <ligand>
        <name>Zn(2+)</name>
        <dbReference type="ChEBI" id="CHEBI:29105"/>
        <label>2</label>
    </ligand>
</feature>
<feature type="binding site" evidence="3">
    <location>
        <position position="189"/>
    </location>
    <ligand>
        <name>Zn(2+)</name>
        <dbReference type="ChEBI" id="CHEBI:29105"/>
        <label>2</label>
    </ligand>
</feature>
<feature type="binding site" evidence="3">
    <location>
        <position position="228"/>
    </location>
    <ligand>
        <name>Zn(2+)</name>
        <dbReference type="ChEBI" id="CHEBI:29105"/>
        <label>3</label>
    </ligand>
</feature>
<feature type="binding site" evidence="3">
    <location>
        <position position="233"/>
    </location>
    <ligand>
        <name>Zn(2+)</name>
        <dbReference type="ChEBI" id="CHEBI:29105"/>
        <label>3</label>
    </ligand>
</feature>
<feature type="binding site" evidence="3">
    <location>
        <position position="251"/>
    </location>
    <ligand>
        <name>Zn(2+)</name>
        <dbReference type="ChEBI" id="CHEBI:29105"/>
        <label>3</label>
    </ligand>
</feature>
<feature type="binding site" evidence="3">
    <location>
        <position position="253"/>
    </location>
    <ligand>
        <name>Zn(2+)</name>
        <dbReference type="ChEBI" id="CHEBI:29105"/>
        <label>3</label>
    </ligand>
</feature>
<feature type="binding site" evidence="3">
    <location>
        <position position="258"/>
    </location>
    <ligand>
        <name>Zn(2+)</name>
        <dbReference type="ChEBI" id="CHEBI:29105"/>
        <label>4</label>
    </ligand>
</feature>
<feature type="binding site" evidence="3">
    <location>
        <position position="261"/>
    </location>
    <ligand>
        <name>Zn(2+)</name>
        <dbReference type="ChEBI" id="CHEBI:29105"/>
        <label>4</label>
    </ligand>
</feature>
<feature type="binding site" evidence="3">
    <location>
        <position position="266"/>
    </location>
    <ligand>
        <name>Zn(2+)</name>
        <dbReference type="ChEBI" id="CHEBI:29105"/>
        <label>4</label>
    </ligand>
</feature>
<feature type="binding site" evidence="3">
    <location>
        <position position="271"/>
    </location>
    <ligand>
        <name>Zn(2+)</name>
        <dbReference type="ChEBI" id="CHEBI:29105"/>
        <label>4</label>
    </ligand>
</feature>
<feature type="binding site" evidence="3">
    <location>
        <position position="298"/>
    </location>
    <ligand>
        <name>Zn(2+)</name>
        <dbReference type="ChEBI" id="CHEBI:29105"/>
        <label>5</label>
    </ligand>
</feature>
<feature type="binding site" evidence="3">
    <location>
        <position position="301"/>
    </location>
    <ligand>
        <name>Zn(2+)</name>
        <dbReference type="ChEBI" id="CHEBI:29105"/>
        <label>5</label>
    </ligand>
</feature>
<feature type="binding site" evidence="3">
    <location>
        <position position="316"/>
    </location>
    <ligand>
        <name>Zn(2+)</name>
        <dbReference type="ChEBI" id="CHEBI:29105"/>
        <label>5</label>
    </ligand>
</feature>
<feature type="binding site" evidence="3">
    <location>
        <position position="320"/>
    </location>
    <ligand>
        <name>Zn(2+)</name>
        <dbReference type="ChEBI" id="CHEBI:29105"/>
        <label>5</label>
    </ligand>
</feature>
<feature type="binding site" evidence="3">
    <location>
        <position position="325"/>
    </location>
    <ligand>
        <name>Zn(2+)</name>
        <dbReference type="ChEBI" id="CHEBI:29105"/>
        <label>6</label>
    </ligand>
</feature>
<feature type="binding site" evidence="3">
    <location>
        <position position="328"/>
    </location>
    <ligand>
        <name>Zn(2+)</name>
        <dbReference type="ChEBI" id="CHEBI:29105"/>
        <label>6</label>
    </ligand>
</feature>
<feature type="binding site" evidence="3">
    <location>
        <position position="335"/>
    </location>
    <ligand>
        <name>Zn(2+)</name>
        <dbReference type="ChEBI" id="CHEBI:29105"/>
        <label>6</label>
    </ligand>
</feature>
<feature type="binding site" evidence="3">
    <location>
        <position position="338"/>
    </location>
    <ligand>
        <name>Zn(2+)</name>
        <dbReference type="ChEBI" id="CHEBI:29105"/>
        <label>6</label>
    </ligand>
</feature>
<feature type="splice variant" id="VSP_036003" description="In isoform 2." evidence="6">
    <original>R</original>
    <variation>S</variation>
    <location>
        <position position="443"/>
    </location>
</feature>
<feature type="splice variant" id="VSP_036004" description="In isoform 2." evidence="6">
    <location>
        <begin position="444"/>
        <end position="542"/>
    </location>
</feature>